<protein>
    <recommendedName>
        <fullName>Pterin-4-alpha-carbinolamine dehydratase</fullName>
        <shortName>PHS</shortName>
        <ecNumber evidence="3">4.2.1.96</ecNumber>
    </recommendedName>
    <alternativeName>
        <fullName>4-alpha-hydroxy-tetrahydropterin dehydratase</fullName>
    </alternativeName>
    <alternativeName>
        <fullName>Dimerization cofactor of hepatocyte nuclear factor 1-alpha</fullName>
        <shortName>DCoH</shortName>
        <shortName>Dimerization cofactor of HNF1</shortName>
        <shortName>xDCoH</shortName>
    </alternativeName>
    <alternativeName>
        <fullName>Phenylalanine hydroxylase-stimulating protein</fullName>
    </alternativeName>
    <alternativeName>
        <fullName>Pterin carbinolamine dehydratase</fullName>
        <shortName>PCD</shortName>
    </alternativeName>
</protein>
<accession>Q91901</accession>
<accession>Q5D030</accession>
<comment type="function">
    <text evidence="2 3">Involved in tetrahydrobiopterin biosynthesis. Seems to both prevent the formation of 7-pterins and accelerate the formation of quinonoid-BH2. Coactivator for HNF1A-dependent transcription. Regulates the dimerization of homeodomain protein HNF1A and enhances its transcriptional activity (By similarity). Also acts as a coactivator for HNF1B-dependent transcription (By similarity).</text>
</comment>
<comment type="catalytic activity">
    <reaction evidence="3">
        <text>(4aS,6R)-4a-hydroxy-L-erythro-5,6,7,8-tetrahydrobiopterin = (6R)-L-erythro-6,7-dihydrobiopterin + H2O</text>
        <dbReference type="Rhea" id="RHEA:11920"/>
        <dbReference type="ChEBI" id="CHEBI:15377"/>
        <dbReference type="ChEBI" id="CHEBI:15642"/>
        <dbReference type="ChEBI" id="CHEBI:43120"/>
        <dbReference type="EC" id="4.2.1.96"/>
    </reaction>
</comment>
<comment type="subunit">
    <text evidence="3">Homotetramer and homodimer.</text>
</comment>
<comment type="subcellular location">
    <subcellularLocation>
        <location evidence="3">Cytoplasm</location>
    </subcellularLocation>
    <subcellularLocation>
        <location evidence="3">Nucleus</location>
    </subcellularLocation>
</comment>
<comment type="similarity">
    <text evidence="4">Belongs to the pterin-4-alpha-carbinolamine dehydratase family.</text>
</comment>
<gene>
    <name type="primary">pcbd</name>
    <name type="synonym">dcoh</name>
</gene>
<keyword id="KW-0007">Acetylation</keyword>
<keyword id="KW-0010">Activator</keyword>
<keyword id="KW-0963">Cytoplasm</keyword>
<keyword id="KW-0456">Lyase</keyword>
<keyword id="KW-0539">Nucleus</keyword>
<keyword id="KW-1185">Reference proteome</keyword>
<keyword id="KW-0783">Tetrahydrobiopterin biosynthesis</keyword>
<keyword id="KW-0804">Transcription</keyword>
<keyword id="KW-0805">Transcription regulation</keyword>
<feature type="initiator methionine" description="Removed" evidence="1">
    <location>
        <position position="1"/>
    </location>
</feature>
<feature type="chain" id="PRO_0000063056" description="Pterin-4-alpha-carbinolamine dehydratase">
    <location>
        <begin position="2"/>
        <end position="104"/>
    </location>
</feature>
<feature type="binding site" evidence="1">
    <location>
        <begin position="61"/>
        <end position="63"/>
    </location>
    <ligand>
        <name>substrate</name>
    </ligand>
</feature>
<feature type="binding site" evidence="1">
    <location>
        <begin position="78"/>
        <end position="81"/>
    </location>
    <ligand>
        <name>substrate</name>
    </ligand>
</feature>
<feature type="modified residue" description="N-acetylalanine" evidence="1">
    <location>
        <position position="2"/>
    </location>
</feature>
<organism>
    <name type="scientific">Xenopus laevis</name>
    <name type="common">African clawed frog</name>
    <dbReference type="NCBI Taxonomy" id="8355"/>
    <lineage>
        <taxon>Eukaryota</taxon>
        <taxon>Metazoa</taxon>
        <taxon>Chordata</taxon>
        <taxon>Craniata</taxon>
        <taxon>Vertebrata</taxon>
        <taxon>Euteleostomi</taxon>
        <taxon>Amphibia</taxon>
        <taxon>Batrachia</taxon>
        <taxon>Anura</taxon>
        <taxon>Pipoidea</taxon>
        <taxon>Pipidae</taxon>
        <taxon>Xenopodinae</taxon>
        <taxon>Xenopus</taxon>
        <taxon>Xenopus</taxon>
    </lineage>
</organism>
<name>PHS_XENLA</name>
<reference key="1">
    <citation type="journal article" date="1995" name="Development">
        <title>Developmental expression of the maternal protein XDCoH, the dimerization cofactor of the homeoprotein LFB1 (HNF1).</title>
        <authorList>
            <person name="Pogge von Strandmann E."/>
            <person name="Ryffel G.U."/>
        </authorList>
    </citation>
    <scope>NUCLEOTIDE SEQUENCE [MRNA]</scope>
    <source>
        <tissue>Liver</tissue>
    </source>
</reference>
<reference key="2">
    <citation type="submission" date="2004-04" db="EMBL/GenBank/DDBJ databases">
        <authorList>
            <consortium name="NIH - Xenopus Gene Collection (XGC) project"/>
        </authorList>
    </citation>
    <scope>NUCLEOTIDE SEQUENCE [LARGE SCALE MRNA]</scope>
    <source>
        <tissue>Ovary</tissue>
    </source>
</reference>
<dbReference type="EC" id="4.2.1.96" evidence="3"/>
<dbReference type="EMBL" id="Z37525">
    <property type="protein sequence ID" value="CAA85762.1"/>
    <property type="molecule type" value="mRNA"/>
</dbReference>
<dbReference type="EMBL" id="BC068690">
    <property type="protein sequence ID" value="AAH68690.1"/>
    <property type="molecule type" value="mRNA"/>
</dbReference>
<dbReference type="PIR" id="I51697">
    <property type="entry name" value="I51697"/>
</dbReference>
<dbReference type="SMR" id="Q91901"/>
<dbReference type="AGR" id="Xenbase:XB-GENE-17331419"/>
<dbReference type="Xenbase" id="XB-GENE-17331419">
    <property type="gene designation" value="pcbd1.S"/>
</dbReference>
<dbReference type="Proteomes" id="UP000186698">
    <property type="component" value="Unplaced"/>
</dbReference>
<dbReference type="GO" id="GO:0005737">
    <property type="term" value="C:cytoplasm"/>
    <property type="evidence" value="ECO:0007669"/>
    <property type="project" value="UniProtKB-SubCell"/>
</dbReference>
<dbReference type="GO" id="GO:0005634">
    <property type="term" value="C:nucleus"/>
    <property type="evidence" value="ECO:0007669"/>
    <property type="project" value="UniProtKB-SubCell"/>
</dbReference>
<dbReference type="GO" id="GO:0008124">
    <property type="term" value="F:4-alpha-hydroxytetrahydrobiopterin dehydratase activity"/>
    <property type="evidence" value="ECO:0000318"/>
    <property type="project" value="GO_Central"/>
</dbReference>
<dbReference type="GO" id="GO:0006729">
    <property type="term" value="P:tetrahydrobiopterin biosynthetic process"/>
    <property type="evidence" value="ECO:0007669"/>
    <property type="project" value="UniProtKB-KW"/>
</dbReference>
<dbReference type="CDD" id="cd00914">
    <property type="entry name" value="PCD_DCoH_subfamily_b"/>
    <property type="match status" value="1"/>
</dbReference>
<dbReference type="FunFam" id="3.30.1360.20:FF:000001">
    <property type="entry name" value="Pterin-4-alpha-carbinolamine dehydratase 2"/>
    <property type="match status" value="1"/>
</dbReference>
<dbReference type="Gene3D" id="3.30.1360.20">
    <property type="entry name" value="Transcriptional coactivator/pterin dehydratase"/>
    <property type="match status" value="1"/>
</dbReference>
<dbReference type="HAMAP" id="MF_00434">
    <property type="entry name" value="Pterin_4_alpha"/>
    <property type="match status" value="1"/>
</dbReference>
<dbReference type="InterPro" id="IPR036428">
    <property type="entry name" value="PCD_sf"/>
</dbReference>
<dbReference type="InterPro" id="IPR001533">
    <property type="entry name" value="Pterin_deHydtase"/>
</dbReference>
<dbReference type="NCBIfam" id="NF002018">
    <property type="entry name" value="PRK00823.1-3"/>
    <property type="match status" value="1"/>
</dbReference>
<dbReference type="NCBIfam" id="NF002020">
    <property type="entry name" value="PRK00823.1-5"/>
    <property type="match status" value="1"/>
</dbReference>
<dbReference type="PANTHER" id="PTHR12599">
    <property type="entry name" value="PTERIN-4-ALPHA-CARBINOLAMINE DEHYDRATASE"/>
    <property type="match status" value="1"/>
</dbReference>
<dbReference type="PANTHER" id="PTHR12599:SF13">
    <property type="entry name" value="PTERIN-4-ALPHA-CARBINOLAMINE DEHYDRATASE"/>
    <property type="match status" value="1"/>
</dbReference>
<dbReference type="Pfam" id="PF01329">
    <property type="entry name" value="Pterin_4a"/>
    <property type="match status" value="1"/>
</dbReference>
<dbReference type="SUPFAM" id="SSF55248">
    <property type="entry name" value="PCD-like"/>
    <property type="match status" value="1"/>
</dbReference>
<sequence length="104" mass="11920">MAGKVHRLSGEEREQLLPNLRAVGWHELDGRDAICKEFHFKDFNRAFGFMTRVALQAEKLDHHPEWFNVYDKVHITLSTHDCGGLSERDINLASFIEQIAASLS</sequence>
<evidence type="ECO:0000250" key="1"/>
<evidence type="ECO:0000250" key="2">
    <source>
        <dbReference type="UniProtKB" id="P61457"/>
    </source>
</evidence>
<evidence type="ECO:0000250" key="3">
    <source>
        <dbReference type="UniProtKB" id="P61459"/>
    </source>
</evidence>
<evidence type="ECO:0000305" key="4"/>
<proteinExistence type="inferred from homology"/>